<keyword id="KW-1015">Disulfide bond</keyword>
<keyword id="KW-0382">Hypotensive agent</keyword>
<keyword id="KW-0964">Secreted</keyword>
<keyword id="KW-0732">Signal</keyword>
<keyword id="KW-0800">Toxin</keyword>
<keyword id="KW-0838">Vasoactive</keyword>
<keyword id="KW-0840">Vasodilator</keyword>
<organism>
    <name type="scientific">Bungarus multicinctus</name>
    <name type="common">Many-banded krait</name>
    <dbReference type="NCBI Taxonomy" id="8616"/>
    <lineage>
        <taxon>Eukaryota</taxon>
        <taxon>Metazoa</taxon>
        <taxon>Chordata</taxon>
        <taxon>Craniata</taxon>
        <taxon>Vertebrata</taxon>
        <taxon>Euteleostomi</taxon>
        <taxon>Lepidosauria</taxon>
        <taxon>Squamata</taxon>
        <taxon>Bifurcata</taxon>
        <taxon>Unidentata</taxon>
        <taxon>Episquamata</taxon>
        <taxon>Toxicofera</taxon>
        <taxon>Serpentes</taxon>
        <taxon>Colubroidea</taxon>
        <taxon>Elapidae</taxon>
        <taxon>Bungarinae</taxon>
        <taxon>Bungarus</taxon>
    </lineage>
</organism>
<protein>
    <recommendedName>
        <fullName evidence="5">Natriuretic peptide BM026</fullName>
        <shortName evidence="5">NP</shortName>
    </recommendedName>
</protein>
<proteinExistence type="evidence at transcript level"/>
<comment type="function">
    <text evidence="1">Natriuretic peptide that dose-dependently induces the rapid relaxation of rat aortic strips phenylephrine-precontracted. Acts by stimulating cGMP production in a dose-dependent manner (by probably activating NPR1 and/or NPR2). May also show potent hypotensive effects.</text>
</comment>
<comment type="subcellular location">
    <subcellularLocation>
        <location evidence="7">Secreted</location>
    </subcellularLocation>
</comment>
<comment type="tissue specificity">
    <text evidence="7">Expressed by the venom gland.</text>
</comment>
<comment type="similarity">
    <text evidence="6">Belongs to the natriuretic peptide family.</text>
</comment>
<feature type="signal peptide" evidence="3">
    <location>
        <begin position="1"/>
        <end position="26"/>
    </location>
</feature>
<feature type="chain" id="PRO_0000425578" description="Natriuretic peptide BM026" evidence="7">
    <location>
        <begin position="27"/>
        <end position="210"/>
    </location>
</feature>
<feature type="region of interest" description="Natriuretic peptide domain 1" evidence="7">
    <location>
        <begin position="83"/>
        <end position="99"/>
    </location>
</feature>
<feature type="region of interest" description="Disordered" evidence="4">
    <location>
        <begin position="122"/>
        <end position="210"/>
    </location>
</feature>
<feature type="region of interest" description="Natriuretic peptide domain 2" evidence="7">
    <location>
        <begin position="166"/>
        <end position="182"/>
    </location>
</feature>
<feature type="compositionally biased region" description="Basic and acidic residues" evidence="4">
    <location>
        <begin position="122"/>
        <end position="134"/>
    </location>
</feature>
<feature type="compositionally biased region" description="Gly residues" evidence="4">
    <location>
        <begin position="140"/>
        <end position="150"/>
    </location>
</feature>
<feature type="compositionally biased region" description="Basic and acidic residues" evidence="4">
    <location>
        <begin position="156"/>
        <end position="176"/>
    </location>
</feature>
<feature type="compositionally biased region" description="Polar residues" evidence="4">
    <location>
        <begin position="201"/>
        <end position="210"/>
    </location>
</feature>
<feature type="disulfide bond" evidence="6">
    <location>
        <begin position="83"/>
        <end position="99"/>
    </location>
</feature>
<feature type="disulfide bond" evidence="2">
    <location>
        <begin position="166"/>
        <end position="182"/>
    </location>
</feature>
<reference key="1">
    <citation type="journal article" date="2011" name="BMC Genomics">
        <title>Venom gland transcriptomes of two elapid snakes (Bungarus multicinctus and Naja atra) and evolution of toxin genes.</title>
        <authorList>
            <person name="Jiang Y."/>
            <person name="Li Y."/>
            <person name="Lee W."/>
            <person name="Xu X."/>
            <person name="Zhang Y."/>
            <person name="Zhao R."/>
            <person name="Zhang Y."/>
            <person name="Wang W."/>
        </authorList>
    </citation>
    <scope>NUCLEOTIDE SEQUENCE [MRNA]</scope>
    <source>
        <tissue>Venom gland</tissue>
    </source>
</reference>
<accession>P0DMD5</accession>
<dbReference type="GO" id="GO:0005576">
    <property type="term" value="C:extracellular region"/>
    <property type="evidence" value="ECO:0007669"/>
    <property type="project" value="UniProtKB-SubCell"/>
</dbReference>
<dbReference type="GO" id="GO:0005179">
    <property type="term" value="F:hormone activity"/>
    <property type="evidence" value="ECO:0007669"/>
    <property type="project" value="InterPro"/>
</dbReference>
<dbReference type="GO" id="GO:0090729">
    <property type="term" value="F:toxin activity"/>
    <property type="evidence" value="ECO:0007669"/>
    <property type="project" value="UniProtKB-KW"/>
</dbReference>
<dbReference type="GO" id="GO:0008217">
    <property type="term" value="P:regulation of blood pressure"/>
    <property type="evidence" value="ECO:0007669"/>
    <property type="project" value="UniProtKB-KW"/>
</dbReference>
<dbReference type="GO" id="GO:0042311">
    <property type="term" value="P:vasodilation"/>
    <property type="evidence" value="ECO:0007669"/>
    <property type="project" value="UniProtKB-KW"/>
</dbReference>
<dbReference type="InterPro" id="IPR000663">
    <property type="entry name" value="Natr_peptide"/>
</dbReference>
<dbReference type="InterPro" id="IPR030480">
    <property type="entry name" value="Natr_peptide_CS"/>
</dbReference>
<dbReference type="Pfam" id="PF00212">
    <property type="entry name" value="ANP"/>
    <property type="match status" value="2"/>
</dbReference>
<dbReference type="SMART" id="SM00183">
    <property type="entry name" value="NAT_PEP"/>
    <property type="match status" value="2"/>
</dbReference>
<dbReference type="PROSITE" id="PS00263">
    <property type="entry name" value="NATRIURETIC_PEPTIDE"/>
    <property type="match status" value="1"/>
</dbReference>
<sequence length="210" mass="21600">MVGPSRLAGGGLLLLLLALLPVALDGKPAPPSQALHKAPAGGTKASQIMQVLLPESKKSWAARDRMVGPYNPAGGGGGHPSSCFGHKIDRISHSSGMGCGRRPNAPAGGTKASQIMQVLLPESKKSRAARDRMVGPDNRAGGGGGGGGGDSSRQQELAKKDQHNNCFGRRIDRISHSTDLGCRRRPNPPPAPTAAPLAVAQFNSKSSQVA</sequence>
<name>VNP_BUNMU</name>
<evidence type="ECO:0000250" key="1">
    <source>
        <dbReference type="UniProtKB" id="D9IX97"/>
    </source>
</evidence>
<evidence type="ECO:0000250" key="2">
    <source>
        <dbReference type="UniProtKB" id="P28374"/>
    </source>
</evidence>
<evidence type="ECO:0000255" key="3"/>
<evidence type="ECO:0000256" key="4">
    <source>
        <dbReference type="SAM" id="MobiDB-lite"/>
    </source>
</evidence>
<evidence type="ECO:0000303" key="5">
    <source>
    </source>
</evidence>
<evidence type="ECO:0000305" key="6"/>
<evidence type="ECO:0000305" key="7">
    <source>
    </source>
</evidence>